<proteinExistence type="inferred from homology"/>
<protein>
    <recommendedName>
        <fullName evidence="1">2,3-diketo-L-gulonate reductase</fullName>
        <shortName evidence="1">2,3-DKG reductase</shortName>
        <ecNumber evidence="1">1.1.1.130</ecNumber>
    </recommendedName>
    <alternativeName>
        <fullName evidence="1">3-dehydro-L-gulonate 2-dehydrogenase</fullName>
    </alternativeName>
</protein>
<organism>
    <name type="scientific">Mannheimia succiniciproducens (strain KCTC 0769BP / MBEL55E)</name>
    <dbReference type="NCBI Taxonomy" id="221988"/>
    <lineage>
        <taxon>Bacteria</taxon>
        <taxon>Pseudomonadati</taxon>
        <taxon>Pseudomonadota</taxon>
        <taxon>Gammaproteobacteria</taxon>
        <taxon>Pasteurellales</taxon>
        <taxon>Pasteurellaceae</taxon>
        <taxon>Basfia</taxon>
    </lineage>
</organism>
<reference key="1">
    <citation type="journal article" date="2004" name="Nat. Biotechnol.">
        <title>The genome sequence of the capnophilic rumen bacterium Mannheimia succiniciproducens.</title>
        <authorList>
            <person name="Hong S.H."/>
            <person name="Kim J.S."/>
            <person name="Lee S.Y."/>
            <person name="In Y.H."/>
            <person name="Choi S.S."/>
            <person name="Rih J.-K."/>
            <person name="Kim C.H."/>
            <person name="Jeong H."/>
            <person name="Hur C.G."/>
            <person name="Kim J.J."/>
        </authorList>
    </citation>
    <scope>NUCLEOTIDE SEQUENCE [LARGE SCALE GENOMIC DNA]</scope>
    <source>
        <strain>KCTC 0769BP / MBEL55E</strain>
    </source>
</reference>
<gene>
    <name evidence="1" type="primary">dlgD</name>
    <name type="ordered locus">MS0054</name>
</gene>
<sequence>MKVSYEELKSEFKRVLLSRNVREDIAEECATVFADTTQAGAYSHGVNRFPRFIQQLENGDIKPEAQPTKVLSLGAIEQWDAHQAIGNLTAKKMMDRAMELASQNGVGIVALRNANHWMRGGSYGWQAAEKGYIGICWTNALAVMPPWGAKECRIGTNPLIVAVPTTPITMVDMSCSMYSYGMLEVHRLQGRQTFVDAGFDDNNNPTRDPATVEKNRRLMPMGFWKGSGLSIVLDMIATLLSNGESTAAVTEDKDDEYCVSQVFIAIEVDRLIDGKTKDEKLNRIMDYVKTAEPVDPNQPVRLPGHEFTTILADNKANGIPVDDTVWAKLKSL</sequence>
<accession>Q65WJ9</accession>
<feature type="chain" id="PRO_0000083834" description="2,3-diketo-L-gulonate reductase">
    <location>
        <begin position="1"/>
        <end position="332"/>
    </location>
</feature>
<feature type="active site" description="Proton donor" evidence="1">
    <location>
        <position position="44"/>
    </location>
</feature>
<feature type="binding site" evidence="1">
    <location>
        <begin position="168"/>
        <end position="174"/>
    </location>
    <ligand>
        <name>NAD(+)</name>
        <dbReference type="ChEBI" id="CHEBI:57540"/>
    </ligand>
</feature>
<feature type="binding site" evidence="1">
    <location>
        <begin position="224"/>
        <end position="225"/>
    </location>
    <ligand>
        <name>NAD(+)</name>
        <dbReference type="ChEBI" id="CHEBI:57540"/>
    </ligand>
</feature>
<feature type="binding site" evidence="1">
    <location>
        <begin position="304"/>
        <end position="306"/>
    </location>
    <ligand>
        <name>NAD(+)</name>
        <dbReference type="ChEBI" id="CHEBI:57540"/>
    </ligand>
</feature>
<keyword id="KW-0963">Cytoplasm</keyword>
<keyword id="KW-0520">NAD</keyword>
<keyword id="KW-0560">Oxidoreductase</keyword>
<dbReference type="EC" id="1.1.1.130" evidence="1"/>
<dbReference type="EMBL" id="AE016827">
    <property type="protein sequence ID" value="AAU36661.1"/>
    <property type="status" value="ALT_INIT"/>
    <property type="molecule type" value="Genomic_DNA"/>
</dbReference>
<dbReference type="RefSeq" id="WP_041639426.1">
    <property type="nucleotide sequence ID" value="NC_006300.1"/>
</dbReference>
<dbReference type="SMR" id="Q65WJ9"/>
<dbReference type="STRING" id="221988.MS0054"/>
<dbReference type="KEGG" id="msu:MS0054"/>
<dbReference type="eggNOG" id="COG2055">
    <property type="taxonomic scope" value="Bacteria"/>
</dbReference>
<dbReference type="HOGENOM" id="CLU_040452_4_0_6"/>
<dbReference type="OrthoDB" id="9811519at2"/>
<dbReference type="Proteomes" id="UP000000607">
    <property type="component" value="Chromosome"/>
</dbReference>
<dbReference type="GO" id="GO:0005737">
    <property type="term" value="C:cytoplasm"/>
    <property type="evidence" value="ECO:0007669"/>
    <property type="project" value="UniProtKB-SubCell"/>
</dbReference>
<dbReference type="GO" id="GO:0047559">
    <property type="term" value="F:3-dehydro-L-gulonate 2-dehydrogenase activity"/>
    <property type="evidence" value="ECO:0007669"/>
    <property type="project" value="UniProtKB-UniRule"/>
</dbReference>
<dbReference type="GO" id="GO:0070403">
    <property type="term" value="F:NAD+ binding"/>
    <property type="evidence" value="ECO:0007669"/>
    <property type="project" value="InterPro"/>
</dbReference>
<dbReference type="Gene3D" id="1.10.1530.10">
    <property type="match status" value="1"/>
</dbReference>
<dbReference type="Gene3D" id="3.30.1370.60">
    <property type="entry name" value="Hypothetical oxidoreductase yiak, domain 2"/>
    <property type="match status" value="1"/>
</dbReference>
<dbReference type="HAMAP" id="MF_00820">
    <property type="entry name" value="Diketo_gul_reduc"/>
    <property type="match status" value="1"/>
</dbReference>
<dbReference type="InterPro" id="IPR023689">
    <property type="entry name" value="Diketo_gul_Rdtase"/>
</dbReference>
<dbReference type="InterPro" id="IPR043144">
    <property type="entry name" value="Mal/L-sulf/L-lact_DH-like_ah"/>
</dbReference>
<dbReference type="InterPro" id="IPR043143">
    <property type="entry name" value="Mal/L-sulf/L-lact_DH-like_NADP"/>
</dbReference>
<dbReference type="InterPro" id="IPR036111">
    <property type="entry name" value="Mal/L-sulfo/L-lacto_DH-like_sf"/>
</dbReference>
<dbReference type="InterPro" id="IPR003767">
    <property type="entry name" value="Malate/L-lactate_DH-like"/>
</dbReference>
<dbReference type="NCBIfam" id="NF009750">
    <property type="entry name" value="PRK13260.1"/>
    <property type="match status" value="1"/>
</dbReference>
<dbReference type="PANTHER" id="PTHR11091:SF3">
    <property type="entry name" value="2,3-DIKETO-L-GULONATE REDUCTASE"/>
    <property type="match status" value="1"/>
</dbReference>
<dbReference type="PANTHER" id="PTHR11091">
    <property type="entry name" value="OXIDOREDUCTASE-RELATED"/>
    <property type="match status" value="1"/>
</dbReference>
<dbReference type="Pfam" id="PF02615">
    <property type="entry name" value="Ldh_2"/>
    <property type="match status" value="1"/>
</dbReference>
<dbReference type="SUPFAM" id="SSF89733">
    <property type="entry name" value="L-sulfolactate dehydrogenase-like"/>
    <property type="match status" value="1"/>
</dbReference>
<comment type="function">
    <text evidence="1">Catalyzes the reduction of 2,3-diketo-L-gulonate in the presence of NADH, to form 3-keto-L-gulonate.</text>
</comment>
<comment type="catalytic activity">
    <reaction evidence="1">
        <text>3-dehydro-L-gulonate + NAD(+) = 2,3-dioxo-L-gulonate + NADH + H(+)</text>
        <dbReference type="Rhea" id="RHEA:21924"/>
        <dbReference type="ChEBI" id="CHEBI:15378"/>
        <dbReference type="ChEBI" id="CHEBI:57441"/>
        <dbReference type="ChEBI" id="CHEBI:57540"/>
        <dbReference type="ChEBI" id="CHEBI:57655"/>
        <dbReference type="ChEBI" id="CHEBI:57945"/>
        <dbReference type="EC" id="1.1.1.130"/>
    </reaction>
</comment>
<comment type="catalytic activity">
    <reaction evidence="1">
        <text>3-dehydro-L-gulonate + NADP(+) = 2,3-dioxo-L-gulonate + NADPH + H(+)</text>
        <dbReference type="Rhea" id="RHEA:21928"/>
        <dbReference type="ChEBI" id="CHEBI:15378"/>
        <dbReference type="ChEBI" id="CHEBI:57441"/>
        <dbReference type="ChEBI" id="CHEBI:57655"/>
        <dbReference type="ChEBI" id="CHEBI:57783"/>
        <dbReference type="ChEBI" id="CHEBI:58349"/>
        <dbReference type="EC" id="1.1.1.130"/>
    </reaction>
</comment>
<comment type="subunit">
    <text evidence="1">Homodimer.</text>
</comment>
<comment type="subcellular location">
    <subcellularLocation>
        <location evidence="1">Cytoplasm</location>
    </subcellularLocation>
</comment>
<comment type="similarity">
    <text evidence="1">Belongs to the LDH2/MDH2 oxidoreductase family. DlgD subfamily.</text>
</comment>
<comment type="sequence caution" evidence="2">
    <conflict type="erroneous initiation">
        <sequence resource="EMBL-CDS" id="AAU36661"/>
    </conflict>
</comment>
<evidence type="ECO:0000255" key="1">
    <source>
        <dbReference type="HAMAP-Rule" id="MF_00820"/>
    </source>
</evidence>
<evidence type="ECO:0000305" key="2"/>
<name>DLGD_MANSM</name>